<organism>
    <name type="scientific">Alkalilimnicola ehrlichii (strain ATCC BAA-1101 / DSM 17681 / MLHE-1)</name>
    <dbReference type="NCBI Taxonomy" id="187272"/>
    <lineage>
        <taxon>Bacteria</taxon>
        <taxon>Pseudomonadati</taxon>
        <taxon>Pseudomonadota</taxon>
        <taxon>Gammaproteobacteria</taxon>
        <taxon>Chromatiales</taxon>
        <taxon>Ectothiorhodospiraceae</taxon>
        <taxon>Alkalilimnicola</taxon>
    </lineage>
</organism>
<dbReference type="EC" id="5.4.3.8" evidence="1"/>
<dbReference type="EMBL" id="CP000453">
    <property type="protein sequence ID" value="ABI56160.1"/>
    <property type="molecule type" value="Genomic_DNA"/>
</dbReference>
<dbReference type="RefSeq" id="WP_011628555.1">
    <property type="nucleotide sequence ID" value="NC_008340.1"/>
</dbReference>
<dbReference type="SMR" id="Q0AAH7"/>
<dbReference type="KEGG" id="aeh:Mlg_0806"/>
<dbReference type="eggNOG" id="COG0001">
    <property type="taxonomic scope" value="Bacteria"/>
</dbReference>
<dbReference type="HOGENOM" id="CLU_016922_1_5_6"/>
<dbReference type="OrthoDB" id="9770449at2"/>
<dbReference type="UniPathway" id="UPA00251">
    <property type="reaction ID" value="UER00317"/>
</dbReference>
<dbReference type="Proteomes" id="UP000001962">
    <property type="component" value="Chromosome"/>
</dbReference>
<dbReference type="GO" id="GO:0005737">
    <property type="term" value="C:cytoplasm"/>
    <property type="evidence" value="ECO:0007669"/>
    <property type="project" value="UniProtKB-SubCell"/>
</dbReference>
<dbReference type="GO" id="GO:0042286">
    <property type="term" value="F:glutamate-1-semialdehyde 2,1-aminomutase activity"/>
    <property type="evidence" value="ECO:0007669"/>
    <property type="project" value="UniProtKB-UniRule"/>
</dbReference>
<dbReference type="GO" id="GO:0030170">
    <property type="term" value="F:pyridoxal phosphate binding"/>
    <property type="evidence" value="ECO:0007669"/>
    <property type="project" value="InterPro"/>
</dbReference>
<dbReference type="GO" id="GO:0008483">
    <property type="term" value="F:transaminase activity"/>
    <property type="evidence" value="ECO:0007669"/>
    <property type="project" value="InterPro"/>
</dbReference>
<dbReference type="GO" id="GO:0006782">
    <property type="term" value="P:protoporphyrinogen IX biosynthetic process"/>
    <property type="evidence" value="ECO:0007669"/>
    <property type="project" value="UniProtKB-UniRule"/>
</dbReference>
<dbReference type="CDD" id="cd00610">
    <property type="entry name" value="OAT_like"/>
    <property type="match status" value="1"/>
</dbReference>
<dbReference type="FunFam" id="3.40.640.10:FF:000021">
    <property type="entry name" value="Glutamate-1-semialdehyde 2,1-aminomutase"/>
    <property type="match status" value="1"/>
</dbReference>
<dbReference type="Gene3D" id="3.90.1150.10">
    <property type="entry name" value="Aspartate Aminotransferase, domain 1"/>
    <property type="match status" value="1"/>
</dbReference>
<dbReference type="Gene3D" id="3.40.640.10">
    <property type="entry name" value="Type I PLP-dependent aspartate aminotransferase-like (Major domain)"/>
    <property type="match status" value="1"/>
</dbReference>
<dbReference type="HAMAP" id="MF_00375">
    <property type="entry name" value="HemL_aminotrans_3"/>
    <property type="match status" value="1"/>
</dbReference>
<dbReference type="InterPro" id="IPR004639">
    <property type="entry name" value="4pyrrol_synth_GluAld_NH2Trfase"/>
</dbReference>
<dbReference type="InterPro" id="IPR005814">
    <property type="entry name" value="Aminotrans_3"/>
</dbReference>
<dbReference type="InterPro" id="IPR049704">
    <property type="entry name" value="Aminotrans_3_PPA_site"/>
</dbReference>
<dbReference type="InterPro" id="IPR015424">
    <property type="entry name" value="PyrdxlP-dep_Trfase"/>
</dbReference>
<dbReference type="InterPro" id="IPR015421">
    <property type="entry name" value="PyrdxlP-dep_Trfase_major"/>
</dbReference>
<dbReference type="InterPro" id="IPR015422">
    <property type="entry name" value="PyrdxlP-dep_Trfase_small"/>
</dbReference>
<dbReference type="NCBIfam" id="TIGR00713">
    <property type="entry name" value="hemL"/>
    <property type="match status" value="1"/>
</dbReference>
<dbReference type="NCBIfam" id="NF000818">
    <property type="entry name" value="PRK00062.1"/>
    <property type="match status" value="1"/>
</dbReference>
<dbReference type="PANTHER" id="PTHR43713">
    <property type="entry name" value="GLUTAMATE-1-SEMIALDEHYDE 2,1-AMINOMUTASE"/>
    <property type="match status" value="1"/>
</dbReference>
<dbReference type="PANTHER" id="PTHR43713:SF3">
    <property type="entry name" value="GLUTAMATE-1-SEMIALDEHYDE 2,1-AMINOMUTASE 1, CHLOROPLASTIC-RELATED"/>
    <property type="match status" value="1"/>
</dbReference>
<dbReference type="Pfam" id="PF00202">
    <property type="entry name" value="Aminotran_3"/>
    <property type="match status" value="1"/>
</dbReference>
<dbReference type="SUPFAM" id="SSF53383">
    <property type="entry name" value="PLP-dependent transferases"/>
    <property type="match status" value="1"/>
</dbReference>
<dbReference type="PROSITE" id="PS00600">
    <property type="entry name" value="AA_TRANSFER_CLASS_3"/>
    <property type="match status" value="1"/>
</dbReference>
<feature type="chain" id="PRO_0000300892" description="Glutamate-1-semialdehyde 2,1-aminomutase">
    <location>
        <begin position="1"/>
        <end position="429"/>
    </location>
</feature>
<feature type="modified residue" description="N6-(pyridoxal phosphate)lysine" evidence="1">
    <location>
        <position position="265"/>
    </location>
</feature>
<protein>
    <recommendedName>
        <fullName evidence="1">Glutamate-1-semialdehyde 2,1-aminomutase</fullName>
        <shortName evidence="1">GSA</shortName>
        <ecNumber evidence="1">5.4.3.8</ecNumber>
    </recommendedName>
    <alternativeName>
        <fullName evidence="1">Glutamate-1-semialdehyde aminotransferase</fullName>
        <shortName evidence="1">GSA-AT</shortName>
    </alternativeName>
</protein>
<name>GSA_ALKEH</name>
<proteinExistence type="inferred from homology"/>
<comment type="catalytic activity">
    <reaction evidence="1">
        <text>(S)-4-amino-5-oxopentanoate = 5-aminolevulinate</text>
        <dbReference type="Rhea" id="RHEA:14265"/>
        <dbReference type="ChEBI" id="CHEBI:57501"/>
        <dbReference type="ChEBI" id="CHEBI:356416"/>
        <dbReference type="EC" id="5.4.3.8"/>
    </reaction>
</comment>
<comment type="cofactor">
    <cofactor evidence="1">
        <name>pyridoxal 5'-phosphate</name>
        <dbReference type="ChEBI" id="CHEBI:597326"/>
    </cofactor>
</comment>
<comment type="pathway">
    <text evidence="1">Porphyrin-containing compound metabolism; protoporphyrin-IX biosynthesis; 5-aminolevulinate from L-glutamyl-tRNA(Glu): step 2/2.</text>
</comment>
<comment type="subunit">
    <text evidence="1">Homodimer.</text>
</comment>
<comment type="subcellular location">
    <subcellularLocation>
        <location evidence="1">Cytoplasm</location>
    </subcellularLocation>
</comment>
<comment type="similarity">
    <text evidence="1">Belongs to the class-III pyridoxal-phosphate-dependent aminotransferase family. HemL subfamily.</text>
</comment>
<accession>Q0AAH7</accession>
<reference key="1">
    <citation type="submission" date="2006-08" db="EMBL/GenBank/DDBJ databases">
        <title>Complete sequence of Alkalilimnicola ehrilichei MLHE-1.</title>
        <authorList>
            <person name="Copeland A."/>
            <person name="Lucas S."/>
            <person name="Lapidus A."/>
            <person name="Barry K."/>
            <person name="Detter J.C."/>
            <person name="Glavina del Rio T."/>
            <person name="Hammon N."/>
            <person name="Israni S."/>
            <person name="Dalin E."/>
            <person name="Tice H."/>
            <person name="Pitluck S."/>
            <person name="Sims D."/>
            <person name="Brettin T."/>
            <person name="Bruce D."/>
            <person name="Han C."/>
            <person name="Tapia R."/>
            <person name="Gilna P."/>
            <person name="Schmutz J."/>
            <person name="Larimer F."/>
            <person name="Land M."/>
            <person name="Hauser L."/>
            <person name="Kyrpides N."/>
            <person name="Mikhailova N."/>
            <person name="Oremland R.S."/>
            <person name="Hoeft S.E."/>
            <person name="Switzer-Blum J."/>
            <person name="Kulp T."/>
            <person name="King G."/>
            <person name="Tabita R."/>
            <person name="Witte B."/>
            <person name="Santini J.M."/>
            <person name="Basu P."/>
            <person name="Hollibaugh J.T."/>
            <person name="Xie G."/>
            <person name="Stolz J.F."/>
            <person name="Richardson P."/>
        </authorList>
    </citation>
    <scope>NUCLEOTIDE SEQUENCE [LARGE SCALE GENOMIC DNA]</scope>
    <source>
        <strain>ATCC BAA-1101 / DSM 17681 / MLHE-1</strain>
    </source>
</reference>
<keyword id="KW-0963">Cytoplasm</keyword>
<keyword id="KW-0413">Isomerase</keyword>
<keyword id="KW-0627">Porphyrin biosynthesis</keyword>
<keyword id="KW-0663">Pyridoxal phosphate</keyword>
<keyword id="KW-1185">Reference proteome</keyword>
<evidence type="ECO:0000255" key="1">
    <source>
        <dbReference type="HAMAP-Rule" id="MF_00375"/>
    </source>
</evidence>
<gene>
    <name evidence="1" type="primary">hemL</name>
    <name type="ordered locus">Mlg_0806</name>
</gene>
<sequence length="429" mass="45441">MQRSHELFERARQHIVGGVNSPVRAFTGVGGEPPFIARAEGPYLYDEDGNRYVDYVCSWGPMVAGHAHPKVVRAVQAAAADGLSFGAPTEVEIRMAEKLKAMLPSLERVRMVNSGTEATMSALRLARGHTGREKIIKFRGCYHGHVDALLVQAGSGALTLGIPGSPGVPAAVVEQTITLPYNDAEAVRECFQRMGDEIAAVIVEPVAGNMNCVPPVPGFLEALRECCDDHGSVLIFDEVMTGFRVGVQCAQGRYGITPDLTCLGKVIGGGMPVGAFGGKAQIMADLAPEGPVYQAGTLSGNPVAMAAGLATLALVDDPATHRALEEATATLVDGLRERAEAAGVSVSLNQAGSMFGLFFTDQNPVTTFEQVQACDLEAFKVFFHAMLEEGVYMAPSAFEAGFLSTAHDTPAIEYTLAAAERAFARVARR</sequence>